<evidence type="ECO:0000250" key="1"/>
<evidence type="ECO:0000250" key="2">
    <source>
        <dbReference type="UniProtKB" id="Q04760"/>
    </source>
</evidence>
<evidence type="ECO:0000250" key="3">
    <source>
        <dbReference type="UniProtKB" id="Q9CPU0"/>
    </source>
</evidence>
<evidence type="ECO:0000255" key="4">
    <source>
        <dbReference type="PROSITE-ProRule" id="PRU01163"/>
    </source>
</evidence>
<evidence type="ECO:0000269" key="5">
    <source>
    </source>
</evidence>
<evidence type="ECO:0000305" key="6"/>
<evidence type="ECO:0000305" key="7">
    <source>
    </source>
</evidence>
<dbReference type="EC" id="4.4.1.5" evidence="5"/>
<dbReference type="EMBL" id="BC061570">
    <property type="protein sequence ID" value="AAH61570.1"/>
    <property type="molecule type" value="mRNA"/>
</dbReference>
<dbReference type="RefSeq" id="NP_997477.1">
    <property type="nucleotide sequence ID" value="NM_207594.3"/>
</dbReference>
<dbReference type="SMR" id="Q6P7Q4"/>
<dbReference type="BioGRID" id="254669">
    <property type="interactions" value="1"/>
</dbReference>
<dbReference type="FunCoup" id="Q6P7Q4">
    <property type="interactions" value="1925"/>
</dbReference>
<dbReference type="STRING" id="10116.ENSRNOP00000000650"/>
<dbReference type="ChEMBL" id="CHEMBL2306"/>
<dbReference type="iPTMnet" id="Q6P7Q4"/>
<dbReference type="PhosphoSitePlus" id="Q6P7Q4"/>
<dbReference type="SwissPalm" id="Q6P7Q4"/>
<dbReference type="jPOST" id="Q6P7Q4"/>
<dbReference type="PaxDb" id="10116-ENSRNOP00000000650"/>
<dbReference type="Ensembl" id="ENSRNOT00000000650.7">
    <property type="protein sequence ID" value="ENSRNOP00000000650.4"/>
    <property type="gene ID" value="ENSRNOG00000000541.7"/>
</dbReference>
<dbReference type="GeneID" id="294320"/>
<dbReference type="KEGG" id="rno:294320"/>
<dbReference type="UCSC" id="RGD:2702">
    <property type="organism name" value="rat"/>
</dbReference>
<dbReference type="AGR" id="RGD:2702"/>
<dbReference type="CTD" id="2739"/>
<dbReference type="RGD" id="2702">
    <property type="gene designation" value="Glo1"/>
</dbReference>
<dbReference type="eggNOG" id="KOG2944">
    <property type="taxonomic scope" value="Eukaryota"/>
</dbReference>
<dbReference type="GeneTree" id="ENSGT00390000009312"/>
<dbReference type="HOGENOM" id="CLU_046006_1_1_1"/>
<dbReference type="InParanoid" id="Q6P7Q4"/>
<dbReference type="OMA" id="THNWDTP"/>
<dbReference type="OrthoDB" id="16820at2759"/>
<dbReference type="PhylomeDB" id="Q6P7Q4"/>
<dbReference type="TreeFam" id="TF105011"/>
<dbReference type="Reactome" id="R-RNO-70268">
    <property type="pathway name" value="Pyruvate metabolism"/>
</dbReference>
<dbReference type="SABIO-RK" id="Q6P7Q4"/>
<dbReference type="UniPathway" id="UPA00619">
    <property type="reaction ID" value="UER00675"/>
</dbReference>
<dbReference type="PRO" id="PR:Q6P7Q4"/>
<dbReference type="Proteomes" id="UP000002494">
    <property type="component" value="Chromosome 20"/>
</dbReference>
<dbReference type="Bgee" id="ENSRNOG00000000541">
    <property type="expression patterns" value="Expressed in quadriceps femoris and 20 other cell types or tissues"/>
</dbReference>
<dbReference type="GO" id="GO:0005829">
    <property type="term" value="C:cytosol"/>
    <property type="evidence" value="ECO:0007669"/>
    <property type="project" value="Ensembl"/>
</dbReference>
<dbReference type="GO" id="GO:0005654">
    <property type="term" value="C:nucleoplasm"/>
    <property type="evidence" value="ECO:0007669"/>
    <property type="project" value="Ensembl"/>
</dbReference>
<dbReference type="GO" id="GO:0005886">
    <property type="term" value="C:plasma membrane"/>
    <property type="evidence" value="ECO:0007669"/>
    <property type="project" value="Ensembl"/>
</dbReference>
<dbReference type="GO" id="GO:0004462">
    <property type="term" value="F:lactoylglutathione lyase activity"/>
    <property type="evidence" value="ECO:0000314"/>
    <property type="project" value="RGD"/>
</dbReference>
<dbReference type="GO" id="GO:0008270">
    <property type="term" value="F:zinc ion binding"/>
    <property type="evidence" value="ECO:0000266"/>
    <property type="project" value="RGD"/>
</dbReference>
<dbReference type="GO" id="GO:0006749">
    <property type="term" value="P:glutathione metabolic process"/>
    <property type="evidence" value="ECO:0000314"/>
    <property type="project" value="RGD"/>
</dbReference>
<dbReference type="GO" id="GO:0009438">
    <property type="term" value="P:methylglyoxal metabolic process"/>
    <property type="evidence" value="ECO:0000314"/>
    <property type="project" value="RGD"/>
</dbReference>
<dbReference type="GO" id="GO:0043066">
    <property type="term" value="P:negative regulation of apoptotic process"/>
    <property type="evidence" value="ECO:0000250"/>
    <property type="project" value="UniProtKB"/>
</dbReference>
<dbReference type="GO" id="GO:0030316">
    <property type="term" value="P:osteoclast differentiation"/>
    <property type="evidence" value="ECO:0000266"/>
    <property type="project" value="RGD"/>
</dbReference>
<dbReference type="GO" id="GO:0006357">
    <property type="term" value="P:regulation of transcription by RNA polymerase II"/>
    <property type="evidence" value="ECO:0000266"/>
    <property type="project" value="RGD"/>
</dbReference>
<dbReference type="CDD" id="cd07233">
    <property type="entry name" value="GlxI_Zn"/>
    <property type="match status" value="1"/>
</dbReference>
<dbReference type="FunFam" id="3.10.180.10:FF:000011">
    <property type="entry name" value="Lactoylglutathione lyase"/>
    <property type="match status" value="1"/>
</dbReference>
<dbReference type="Gene3D" id="3.10.180.10">
    <property type="entry name" value="2,3-Dihydroxybiphenyl 1,2-Dioxygenase, domain 1"/>
    <property type="match status" value="1"/>
</dbReference>
<dbReference type="InterPro" id="IPR029068">
    <property type="entry name" value="Glyas_Bleomycin-R_OHBP_Dase"/>
</dbReference>
<dbReference type="InterPro" id="IPR004360">
    <property type="entry name" value="Glyas_Fos-R_dOase_dom"/>
</dbReference>
<dbReference type="InterPro" id="IPR004361">
    <property type="entry name" value="Glyoxalase_1"/>
</dbReference>
<dbReference type="InterPro" id="IPR018146">
    <property type="entry name" value="Glyoxalase_1_CS"/>
</dbReference>
<dbReference type="InterPro" id="IPR037523">
    <property type="entry name" value="VOC"/>
</dbReference>
<dbReference type="NCBIfam" id="TIGR00068">
    <property type="entry name" value="glyox_I"/>
    <property type="match status" value="1"/>
</dbReference>
<dbReference type="PANTHER" id="PTHR10374:SF30">
    <property type="entry name" value="LACTOYLGLUTATHIONE LYASE"/>
    <property type="match status" value="1"/>
</dbReference>
<dbReference type="PANTHER" id="PTHR10374">
    <property type="entry name" value="LACTOYLGLUTATHIONE LYASE GLYOXALASE I"/>
    <property type="match status" value="1"/>
</dbReference>
<dbReference type="Pfam" id="PF00903">
    <property type="entry name" value="Glyoxalase"/>
    <property type="match status" value="1"/>
</dbReference>
<dbReference type="SUPFAM" id="SSF54593">
    <property type="entry name" value="Glyoxalase/Bleomycin resistance protein/Dihydroxybiphenyl dioxygenase"/>
    <property type="match status" value="1"/>
</dbReference>
<dbReference type="PROSITE" id="PS00934">
    <property type="entry name" value="GLYOXALASE_I_1"/>
    <property type="match status" value="1"/>
</dbReference>
<dbReference type="PROSITE" id="PS00935">
    <property type="entry name" value="GLYOXALASE_I_2"/>
    <property type="match status" value="1"/>
</dbReference>
<dbReference type="PROSITE" id="PS51819">
    <property type="entry name" value="VOC"/>
    <property type="match status" value="1"/>
</dbReference>
<sequence>MAEPQPASSGLTDEAALSCCSDPDPSTKDFLLQQTMLRIKDPKKSLDFYTRVLGLTLLQKLDFPSMKFSLYFLAYEDKNDIPKDKTERTAWAFSRKATLELTHNWGTEDDETQSYHNGNSDPRGFGHIGIAVPDVYEACKRFEELGVKFVKKPDDGKMKGLAFVQDPDGYWIEILNPNKMATII</sequence>
<proteinExistence type="evidence at protein level"/>
<protein>
    <recommendedName>
        <fullName>Lactoylglutathione lyase</fullName>
        <ecNumber evidence="5">4.4.1.5</ecNumber>
    </recommendedName>
    <alternativeName>
        <fullName>Aldoketomutase</fullName>
    </alternativeName>
    <alternativeName>
        <fullName>Glyoxalase I</fullName>
        <shortName>Glx I</shortName>
    </alternativeName>
    <alternativeName>
        <fullName>Ketone-aldehyde mutase</fullName>
    </alternativeName>
    <alternativeName>
        <fullName>Methylglyoxalase</fullName>
    </alternativeName>
    <alternativeName>
        <fullName>S-D-lactoylglutathione methylglyoxal lyase</fullName>
    </alternativeName>
</protein>
<organism>
    <name type="scientific">Rattus norvegicus</name>
    <name type="common">Rat</name>
    <dbReference type="NCBI Taxonomy" id="10116"/>
    <lineage>
        <taxon>Eukaryota</taxon>
        <taxon>Metazoa</taxon>
        <taxon>Chordata</taxon>
        <taxon>Craniata</taxon>
        <taxon>Vertebrata</taxon>
        <taxon>Euteleostomi</taxon>
        <taxon>Mammalia</taxon>
        <taxon>Eutheria</taxon>
        <taxon>Euarchontoglires</taxon>
        <taxon>Glires</taxon>
        <taxon>Rodentia</taxon>
        <taxon>Myomorpha</taxon>
        <taxon>Muroidea</taxon>
        <taxon>Muridae</taxon>
        <taxon>Murinae</taxon>
        <taxon>Rattus</taxon>
    </lineage>
</organism>
<accession>Q6P7Q4</accession>
<gene>
    <name type="primary">Glo1</name>
</gene>
<name>LGUL_RAT</name>
<reference key="1">
    <citation type="journal article" date="2004" name="Genome Res.">
        <title>The status, quality, and expansion of the NIH full-length cDNA project: the Mammalian Gene Collection (MGC).</title>
        <authorList>
            <consortium name="The MGC Project Team"/>
        </authorList>
    </citation>
    <scope>NUCLEOTIDE SEQUENCE [LARGE SCALE MRNA]</scope>
    <source>
        <tissue>Pituitary</tissue>
    </source>
</reference>
<reference key="2">
    <citation type="submission" date="2007-04" db="UniProtKB">
        <authorList>
            <person name="Lubec G."/>
            <person name="Afjehi-Sadat L."/>
            <person name="Chen W.-Q."/>
        </authorList>
    </citation>
    <scope>PROTEIN SEQUENCE OF 29-38; 44-83; 89-95 AND 124-148</scope>
    <scope>IDENTIFICATION BY MASS SPECTROMETRY</scope>
    <source>
        <strain>Sprague-Dawley</strain>
        <tissue>Hippocampus</tissue>
        <tissue>Spinal cord</tissue>
    </source>
</reference>
<reference key="3">
    <citation type="journal article" date="1995" name="Mech. Ageing Dev.">
        <title>Contents of D-lactate and its related metabolites as well as enzyme activities in the liver, muscle and blood plasma of aging rats.</title>
        <authorList>
            <person name="Kawase M."/>
            <person name="Kondoh C."/>
            <person name="Matsumoto S."/>
            <person name="Teshigawara M."/>
            <person name="Chisaka Y."/>
            <person name="Higashiura M."/>
            <person name="Nakata K."/>
            <person name="Ohmori S."/>
        </authorList>
    </citation>
    <scope>FUNCTION</scope>
    <scope>CATALYTIC ACTIVITY</scope>
</reference>
<keyword id="KW-0007">Acetylation</keyword>
<keyword id="KW-0903">Direct protein sequencing</keyword>
<keyword id="KW-1015">Disulfide bond</keyword>
<keyword id="KW-0318">Glutathionylation</keyword>
<keyword id="KW-0456">Lyase</keyword>
<keyword id="KW-0479">Metal-binding</keyword>
<keyword id="KW-0597">Phosphoprotein</keyword>
<keyword id="KW-1185">Reference proteome</keyword>
<keyword id="KW-0862">Zinc</keyword>
<comment type="function">
    <text evidence="2 3 5">Catalyzes the conversion of hemimercaptal, formed from methylglyoxal and glutathione, to S-lactoylglutathione (PubMed:8719777). Involved in the regulation of TNF-induced transcriptional activity of NF-kappa-B (By similarity). Required for normal osteoclastogenesis (By similarity).</text>
</comment>
<comment type="catalytic activity">
    <reaction evidence="5">
        <text>(R)-S-lactoylglutathione = methylglyoxal + glutathione</text>
        <dbReference type="Rhea" id="RHEA:19069"/>
        <dbReference type="ChEBI" id="CHEBI:17158"/>
        <dbReference type="ChEBI" id="CHEBI:57474"/>
        <dbReference type="ChEBI" id="CHEBI:57925"/>
        <dbReference type="EC" id="4.4.1.5"/>
    </reaction>
    <physiologicalReaction direction="right-to-left" evidence="7">
        <dbReference type="Rhea" id="RHEA:19071"/>
    </physiologicalReaction>
</comment>
<comment type="cofactor">
    <cofactor evidence="2">
        <name>Zn(2+)</name>
        <dbReference type="ChEBI" id="CHEBI:29105"/>
    </cofactor>
    <text evidence="2">Binds 1 zinc ion per subunit. In the homodimer, two zinc ions are bound between subunits.</text>
</comment>
<comment type="pathway">
    <text>Secondary metabolite metabolism; methylglyoxal degradation; (R)-lactate from methylglyoxal: step 1/2.</text>
</comment>
<comment type="subunit">
    <text evidence="2">Homodimer.</text>
</comment>
<comment type="PTM">
    <text evidence="2">Glutathionylation at Cys-139 inhibits enzyme activity.</text>
</comment>
<comment type="PTM">
    <text evidence="2">Phosphorylated at Thr-107 in the presence of CaMK2. However, this is a consensus site for phosphorylation by CK2 so phosphorylation may be mediated by CK2 rather than CaMK2. Phosphorylation is induced by TNF and suppresses the TNF-induced transcriptional activity of NF-kappa-B (By similarity).</text>
</comment>
<comment type="PTM">
    <text evidence="2">Exists in a nitric oxide (NO)-modified form. The exact nature of the modification is unknown, but it suppresses the TNF-induced transcriptional activity of NF-kappa-B (By similarity).</text>
</comment>
<comment type="similarity">
    <text evidence="6">Belongs to the glyoxalase I family.</text>
</comment>
<feature type="initiator methionine" description="Removed" evidence="2">
    <location>
        <position position="1"/>
    </location>
</feature>
<feature type="chain" id="PRO_0000168079" description="Lactoylglutathione lyase">
    <location>
        <begin position="2"/>
        <end position="184"/>
    </location>
</feature>
<feature type="domain" description="VOC" evidence="4">
    <location>
        <begin position="31"/>
        <end position="177"/>
    </location>
</feature>
<feature type="active site" description="Proton donor/acceptor" evidence="1">
    <location>
        <position position="173"/>
    </location>
</feature>
<feature type="binding site" evidence="1">
    <location>
        <position position="34"/>
    </location>
    <ligand>
        <name>substrate</name>
        <note>ligand shared between dimeric partners</note>
    </ligand>
</feature>
<feature type="binding site" evidence="2">
    <location>
        <position position="34"/>
    </location>
    <ligand>
        <name>Zn(2+)</name>
        <dbReference type="ChEBI" id="CHEBI:29105"/>
        <note>ligand shared between dimeric partners</note>
    </ligand>
</feature>
<feature type="binding site" evidence="1">
    <location>
        <position position="38"/>
    </location>
    <ligand>
        <name>substrate</name>
        <note>ligand shared between dimeric partners</note>
    </ligand>
</feature>
<feature type="binding site" evidence="2">
    <location>
        <position position="100"/>
    </location>
    <ligand>
        <name>Zn(2+)</name>
        <dbReference type="ChEBI" id="CHEBI:29105"/>
        <note>ligand shared between dimeric partners</note>
    </ligand>
</feature>
<feature type="binding site" evidence="1">
    <location>
        <position position="104"/>
    </location>
    <ligand>
        <name>substrate</name>
        <note>ligand shared between dimeric partners</note>
    </ligand>
</feature>
<feature type="binding site" description="in other chain" evidence="1">
    <location>
        <position position="123"/>
    </location>
    <ligand>
        <name>substrate</name>
        <note>ligand shared between dimeric partners</note>
    </ligand>
</feature>
<feature type="binding site" description="in other chain" evidence="1">
    <location>
        <position position="127"/>
    </location>
    <ligand>
        <name>substrate</name>
        <note>ligand shared between dimeric partners</note>
    </ligand>
</feature>
<feature type="binding site" description="in other chain" evidence="2">
    <location>
        <position position="127"/>
    </location>
    <ligand>
        <name>Zn(2+)</name>
        <dbReference type="ChEBI" id="CHEBI:29105"/>
        <note>ligand shared between dimeric partners</note>
    </ligand>
</feature>
<feature type="binding site" description="in other chain" evidence="1">
    <location>
        <begin position="157"/>
        <end position="158"/>
    </location>
    <ligand>
        <name>substrate</name>
        <note>ligand shared between dimeric partners</note>
    </ligand>
</feature>
<feature type="binding site" description="in other chain" evidence="2">
    <location>
        <position position="173"/>
    </location>
    <ligand>
        <name>Zn(2+)</name>
        <dbReference type="ChEBI" id="CHEBI:29105"/>
        <note>ligand shared between dimeric partners</note>
    </ligand>
</feature>
<feature type="modified residue" description="N-acetylalanine" evidence="2">
    <location>
        <position position="2"/>
    </location>
</feature>
<feature type="modified residue" description="Phosphothreonine" evidence="2">
    <location>
        <position position="107"/>
    </location>
</feature>
<feature type="modified residue" description="S-glutathionyl cysteine" evidence="1">
    <location>
        <position position="139"/>
    </location>
</feature>
<feature type="modified residue" description="N6-acetyllysine; alternate" evidence="2">
    <location>
        <position position="148"/>
    </location>
</feature>
<feature type="modified residue" description="N6-succinyllysine; alternate" evidence="3">
    <location>
        <position position="148"/>
    </location>
</feature>
<feature type="disulfide bond" evidence="1">
    <location>
        <begin position="19"/>
        <end position="20"/>
    </location>
</feature>